<accession>P67489</accession>
<accession>Q8NW88</accession>
<accession>Q99TN3</accession>
<name>YQGF_STAAM</name>
<protein>
    <recommendedName>
        <fullName evidence="1">Putative pre-16S rRNA nuclease</fullName>
        <ecNumber evidence="1">3.1.-.-</ecNumber>
    </recommendedName>
</protein>
<comment type="function">
    <text evidence="1">Could be a nuclease involved in processing of the 5'-end of pre-16S rRNA.</text>
</comment>
<comment type="subcellular location">
    <subcellularLocation>
        <location evidence="1">Cytoplasm</location>
    </subcellularLocation>
</comment>
<comment type="similarity">
    <text evidence="1">Belongs to the YqgF nuclease family.</text>
</comment>
<comment type="sequence caution" evidence="2">
    <conflict type="erroneous initiation">
        <sequence resource="EMBL-CDS" id="BAB57778"/>
    </conflict>
    <text>Truncated N-terminus.</text>
</comment>
<reference key="1">
    <citation type="journal article" date="2001" name="Lancet">
        <title>Whole genome sequencing of meticillin-resistant Staphylococcus aureus.</title>
        <authorList>
            <person name="Kuroda M."/>
            <person name="Ohta T."/>
            <person name="Uchiyama I."/>
            <person name="Baba T."/>
            <person name="Yuzawa H."/>
            <person name="Kobayashi I."/>
            <person name="Cui L."/>
            <person name="Oguchi A."/>
            <person name="Aoki K."/>
            <person name="Nagai Y."/>
            <person name="Lian J.-Q."/>
            <person name="Ito T."/>
            <person name="Kanamori M."/>
            <person name="Matsumaru H."/>
            <person name="Maruyama A."/>
            <person name="Murakami H."/>
            <person name="Hosoyama A."/>
            <person name="Mizutani-Ui Y."/>
            <person name="Takahashi N.K."/>
            <person name="Sawano T."/>
            <person name="Inoue R."/>
            <person name="Kaito C."/>
            <person name="Sekimizu K."/>
            <person name="Hirakawa H."/>
            <person name="Kuhara S."/>
            <person name="Goto S."/>
            <person name="Yabuzaki J."/>
            <person name="Kanehisa M."/>
            <person name="Yamashita A."/>
            <person name="Oshima K."/>
            <person name="Furuya K."/>
            <person name="Yoshino C."/>
            <person name="Shiba T."/>
            <person name="Hattori M."/>
            <person name="Ogasawara N."/>
            <person name="Hayashi H."/>
            <person name="Hiramatsu K."/>
        </authorList>
    </citation>
    <scope>NUCLEOTIDE SEQUENCE [LARGE SCALE GENOMIC DNA]</scope>
    <source>
        <strain>Mu50 / ATCC 700699</strain>
    </source>
</reference>
<keyword id="KW-0963">Cytoplasm</keyword>
<keyword id="KW-0378">Hydrolase</keyword>
<keyword id="KW-0540">Nuclease</keyword>
<keyword id="KW-0690">Ribosome biogenesis</keyword>
<dbReference type="EC" id="3.1.-.-" evidence="1"/>
<dbReference type="EMBL" id="BA000017">
    <property type="protein sequence ID" value="BAB57778.1"/>
    <property type="status" value="ALT_INIT"/>
    <property type="molecule type" value="Genomic_DNA"/>
</dbReference>
<dbReference type="SMR" id="P67489"/>
<dbReference type="KEGG" id="sav:SAV1616"/>
<dbReference type="HOGENOM" id="CLU_098240_2_0_9"/>
<dbReference type="Proteomes" id="UP000002481">
    <property type="component" value="Chromosome"/>
</dbReference>
<dbReference type="GO" id="GO:0005829">
    <property type="term" value="C:cytosol"/>
    <property type="evidence" value="ECO:0007669"/>
    <property type="project" value="TreeGrafter"/>
</dbReference>
<dbReference type="GO" id="GO:0004518">
    <property type="term" value="F:nuclease activity"/>
    <property type="evidence" value="ECO:0007669"/>
    <property type="project" value="UniProtKB-KW"/>
</dbReference>
<dbReference type="GO" id="GO:0000967">
    <property type="term" value="P:rRNA 5'-end processing"/>
    <property type="evidence" value="ECO:0007669"/>
    <property type="project" value="UniProtKB-UniRule"/>
</dbReference>
<dbReference type="CDD" id="cd16964">
    <property type="entry name" value="YqgF"/>
    <property type="match status" value="1"/>
</dbReference>
<dbReference type="FunFam" id="3.30.420.140:FF:000003">
    <property type="entry name" value="Putative pre-16S rRNA nuclease"/>
    <property type="match status" value="1"/>
</dbReference>
<dbReference type="Gene3D" id="3.30.420.140">
    <property type="entry name" value="YqgF/RNase H-like domain"/>
    <property type="match status" value="1"/>
</dbReference>
<dbReference type="HAMAP" id="MF_00651">
    <property type="entry name" value="Nuclease_YqgF"/>
    <property type="match status" value="1"/>
</dbReference>
<dbReference type="InterPro" id="IPR012337">
    <property type="entry name" value="RNaseH-like_sf"/>
</dbReference>
<dbReference type="InterPro" id="IPR005227">
    <property type="entry name" value="YqgF"/>
</dbReference>
<dbReference type="InterPro" id="IPR006641">
    <property type="entry name" value="YqgF/RNaseH-like_dom"/>
</dbReference>
<dbReference type="InterPro" id="IPR037027">
    <property type="entry name" value="YqgF/RNaseH-like_dom_sf"/>
</dbReference>
<dbReference type="NCBIfam" id="TIGR00250">
    <property type="entry name" value="RNAse_H_YqgF"/>
    <property type="match status" value="1"/>
</dbReference>
<dbReference type="PANTHER" id="PTHR33317">
    <property type="entry name" value="POLYNUCLEOTIDYL TRANSFERASE, RIBONUCLEASE H-LIKE SUPERFAMILY PROTEIN"/>
    <property type="match status" value="1"/>
</dbReference>
<dbReference type="PANTHER" id="PTHR33317:SF4">
    <property type="entry name" value="POLYNUCLEOTIDYL TRANSFERASE, RIBONUCLEASE H-LIKE SUPERFAMILY PROTEIN"/>
    <property type="match status" value="1"/>
</dbReference>
<dbReference type="Pfam" id="PF03652">
    <property type="entry name" value="RuvX"/>
    <property type="match status" value="1"/>
</dbReference>
<dbReference type="SMART" id="SM00732">
    <property type="entry name" value="YqgFc"/>
    <property type="match status" value="1"/>
</dbReference>
<dbReference type="SUPFAM" id="SSF53098">
    <property type="entry name" value="Ribonuclease H-like"/>
    <property type="match status" value="1"/>
</dbReference>
<organism>
    <name type="scientific">Staphylococcus aureus (strain Mu50 / ATCC 700699)</name>
    <dbReference type="NCBI Taxonomy" id="158878"/>
    <lineage>
        <taxon>Bacteria</taxon>
        <taxon>Bacillati</taxon>
        <taxon>Bacillota</taxon>
        <taxon>Bacilli</taxon>
        <taxon>Bacillales</taxon>
        <taxon>Staphylococcaceae</taxon>
        <taxon>Staphylococcus</taxon>
    </lineage>
</organism>
<evidence type="ECO:0000255" key="1">
    <source>
        <dbReference type="HAMAP-Rule" id="MF_00651"/>
    </source>
</evidence>
<evidence type="ECO:0000305" key="2"/>
<gene>
    <name type="ordered locus">SAV1616</name>
</gene>
<sequence>MLQHKILGLDVGSRTVGIAISDIMGWTAQGLDTLRINEENNELGIDQLVDIIKKHNVGTVVIGLPKNMNNSIGFRGEASLTYKEKLLEAYPSIEIVMWDERLSTMAAERSLLEADVSRQKRKQVIDKMAAVFILQGYLDSLH</sequence>
<proteinExistence type="inferred from homology"/>
<feature type="chain" id="PRO_0000172138" description="Putative pre-16S rRNA nuclease">
    <location>
        <begin position="1"/>
        <end position="142"/>
    </location>
</feature>